<dbReference type="EC" id="3.1.-.-" evidence="1"/>
<dbReference type="EMBL" id="CP000099">
    <property type="protein sequence ID" value="AAZ70523.1"/>
    <property type="molecule type" value="Genomic_DNA"/>
</dbReference>
<dbReference type="SMR" id="Q46C69"/>
<dbReference type="STRING" id="269797.Mbar_A1576"/>
<dbReference type="PaxDb" id="269797-Mbar_A1576"/>
<dbReference type="KEGG" id="mba:Mbar_A1576"/>
<dbReference type="eggNOG" id="arCOG01741">
    <property type="taxonomic scope" value="Archaea"/>
</dbReference>
<dbReference type="HOGENOM" id="CLU_023334_0_0_2"/>
<dbReference type="OrthoDB" id="31300at2157"/>
<dbReference type="GO" id="GO:0005737">
    <property type="term" value="C:cytoplasm"/>
    <property type="evidence" value="ECO:0007669"/>
    <property type="project" value="UniProtKB-SubCell"/>
</dbReference>
<dbReference type="GO" id="GO:0004519">
    <property type="term" value="F:endonuclease activity"/>
    <property type="evidence" value="ECO:0007669"/>
    <property type="project" value="UniProtKB-UniRule"/>
</dbReference>
<dbReference type="GO" id="GO:0046872">
    <property type="term" value="F:metal ion binding"/>
    <property type="evidence" value="ECO:0007669"/>
    <property type="project" value="UniProtKB-UniRule"/>
</dbReference>
<dbReference type="GO" id="GO:0070651">
    <property type="term" value="P:nonfunctional rRNA decay"/>
    <property type="evidence" value="ECO:0007669"/>
    <property type="project" value="TreeGrafter"/>
</dbReference>
<dbReference type="GO" id="GO:0070966">
    <property type="term" value="P:nuclear-transcribed mRNA catabolic process, no-go decay"/>
    <property type="evidence" value="ECO:0007669"/>
    <property type="project" value="InterPro"/>
</dbReference>
<dbReference type="GO" id="GO:0070481">
    <property type="term" value="P:nuclear-transcribed mRNA catabolic process, non-stop decay"/>
    <property type="evidence" value="ECO:0007669"/>
    <property type="project" value="InterPro"/>
</dbReference>
<dbReference type="GO" id="GO:0032790">
    <property type="term" value="P:ribosome disassembly"/>
    <property type="evidence" value="ECO:0007669"/>
    <property type="project" value="TreeGrafter"/>
</dbReference>
<dbReference type="GO" id="GO:0071025">
    <property type="term" value="P:RNA surveillance"/>
    <property type="evidence" value="ECO:0007669"/>
    <property type="project" value="InterPro"/>
</dbReference>
<dbReference type="FunFam" id="2.30.30.870:FF:000002">
    <property type="entry name" value="Protein pelota homolog"/>
    <property type="match status" value="1"/>
</dbReference>
<dbReference type="FunFam" id="3.30.1330.30:FF:000059">
    <property type="entry name" value="Protein pelota homolog"/>
    <property type="match status" value="1"/>
</dbReference>
<dbReference type="Gene3D" id="3.30.1330.30">
    <property type="match status" value="1"/>
</dbReference>
<dbReference type="Gene3D" id="3.30.420.60">
    <property type="entry name" value="eRF1 domain 2"/>
    <property type="match status" value="1"/>
</dbReference>
<dbReference type="Gene3D" id="2.30.30.870">
    <property type="entry name" value="Pelota, domain A"/>
    <property type="match status" value="1"/>
</dbReference>
<dbReference type="HAMAP" id="MF_01853">
    <property type="entry name" value="PelO"/>
    <property type="match status" value="1"/>
</dbReference>
<dbReference type="InterPro" id="IPR042226">
    <property type="entry name" value="eFR1_2_sf"/>
</dbReference>
<dbReference type="InterPro" id="IPR005140">
    <property type="entry name" value="eRF1_1_Pelota"/>
</dbReference>
<dbReference type="InterPro" id="IPR005141">
    <property type="entry name" value="eRF1_2"/>
</dbReference>
<dbReference type="InterPro" id="IPR005142">
    <property type="entry name" value="eRF1_3"/>
</dbReference>
<dbReference type="InterPro" id="IPR038069">
    <property type="entry name" value="Pelota/DOM34_N"/>
</dbReference>
<dbReference type="InterPro" id="IPR023521">
    <property type="entry name" value="Pelota_arc"/>
</dbReference>
<dbReference type="InterPro" id="IPR029064">
    <property type="entry name" value="Ribosomal_eL30-like_sf"/>
</dbReference>
<dbReference type="InterPro" id="IPR004405">
    <property type="entry name" value="Transl-rel_pelota"/>
</dbReference>
<dbReference type="NCBIfam" id="TIGR00111">
    <property type="entry name" value="pelota"/>
    <property type="match status" value="1"/>
</dbReference>
<dbReference type="PANTHER" id="PTHR10853">
    <property type="entry name" value="PELOTA"/>
    <property type="match status" value="1"/>
</dbReference>
<dbReference type="PANTHER" id="PTHR10853:SF0">
    <property type="entry name" value="PROTEIN PELOTA HOMOLOG"/>
    <property type="match status" value="1"/>
</dbReference>
<dbReference type="Pfam" id="PF03463">
    <property type="entry name" value="eRF1_1"/>
    <property type="match status" value="1"/>
</dbReference>
<dbReference type="Pfam" id="PF03464">
    <property type="entry name" value="eRF1_2"/>
    <property type="match status" value="1"/>
</dbReference>
<dbReference type="Pfam" id="PF03465">
    <property type="entry name" value="eRF1_3"/>
    <property type="match status" value="1"/>
</dbReference>
<dbReference type="SMART" id="SM01194">
    <property type="entry name" value="eRF1_1"/>
    <property type="match status" value="1"/>
</dbReference>
<dbReference type="SUPFAM" id="SSF159065">
    <property type="entry name" value="Dom34/Pelota N-terminal domain-like"/>
    <property type="match status" value="1"/>
</dbReference>
<dbReference type="SUPFAM" id="SSF55315">
    <property type="entry name" value="L30e-like"/>
    <property type="match status" value="1"/>
</dbReference>
<dbReference type="SUPFAM" id="SSF53137">
    <property type="entry name" value="Translational machinery components"/>
    <property type="match status" value="1"/>
</dbReference>
<reference key="1">
    <citation type="journal article" date="2006" name="J. Bacteriol.">
        <title>The Methanosarcina barkeri genome: comparative analysis with Methanosarcina acetivorans and Methanosarcina mazei reveals extensive rearrangement within methanosarcinal genomes.</title>
        <authorList>
            <person name="Maeder D.L."/>
            <person name="Anderson I."/>
            <person name="Brettin T.S."/>
            <person name="Bruce D.C."/>
            <person name="Gilna P."/>
            <person name="Han C.S."/>
            <person name="Lapidus A."/>
            <person name="Metcalf W.W."/>
            <person name="Saunders E."/>
            <person name="Tapia R."/>
            <person name="Sowers K.R."/>
        </authorList>
    </citation>
    <scope>NUCLEOTIDE SEQUENCE [LARGE SCALE GENOMIC DNA]</scope>
    <source>
        <strain>Fusaro / DSM 804</strain>
    </source>
</reference>
<sequence length="350" mass="39503">MRVTNRSLKGREGEIAVTAETLDDLWHLKYIIEKGDLVFSVTKRKADSASDKIRPEKVEKVKVRLGIRVDDLEFHKFANRLRLHGMIERGMDVGSYHTLNIEIGTNLSVIKEHWKNDQLQRIKDAEEASKRPKVVMVAIEEGDADIGFVHHYGIEIYSHIRQSSGKRETGLRNEFFREVVEQLRHAVPEEASIVIAGPGFTKEDFIKYFQETEPAMASKALIEDTSMIGMSGFQEVLRRGAVDRIMQESRIARESALMEDLIREISMDGKAAYGLGDVKNALNFGAVETLLVADETLREGREKGEDIDKLLREVEQAQGKVVVFSTAFEPGEKLHKLGGIAALLRFKVRG</sequence>
<gene>
    <name evidence="1" type="primary">pelA</name>
    <name type="ordered locus">Mbar_A1576</name>
</gene>
<protein>
    <recommendedName>
        <fullName evidence="1">Protein pelota homolog</fullName>
        <ecNumber evidence="1">3.1.-.-</ecNumber>
    </recommendedName>
</protein>
<comment type="function">
    <text evidence="1">May function in recognizing stalled ribosomes, interact with stem-loop structures in stalled mRNA molecules, and effect endonucleolytic cleavage of the mRNA. May play a role in the release non-functional ribosomes and degradation of damaged mRNAs. Has endoribonuclease activity.</text>
</comment>
<comment type="cofactor">
    <cofactor evidence="1">
        <name>a divalent metal cation</name>
        <dbReference type="ChEBI" id="CHEBI:60240"/>
    </cofactor>
</comment>
<comment type="subunit">
    <text evidence="1">Monomer.</text>
</comment>
<comment type="subcellular location">
    <subcellularLocation>
        <location evidence="1">Cytoplasm</location>
    </subcellularLocation>
</comment>
<comment type="domain">
    <text evidence="1">The N-terminal domain has the RNA-binding Sm fold. It harbors the endoribonuclease activity.</text>
</comment>
<comment type="similarity">
    <text evidence="1">Belongs to the eukaryotic release factor 1 family. Pelota subfamily.</text>
</comment>
<accession>Q46C69</accession>
<organism>
    <name type="scientific">Methanosarcina barkeri (strain Fusaro / DSM 804)</name>
    <dbReference type="NCBI Taxonomy" id="269797"/>
    <lineage>
        <taxon>Archaea</taxon>
        <taxon>Methanobacteriati</taxon>
        <taxon>Methanobacteriota</taxon>
        <taxon>Stenosarchaea group</taxon>
        <taxon>Methanomicrobia</taxon>
        <taxon>Methanosarcinales</taxon>
        <taxon>Methanosarcinaceae</taxon>
        <taxon>Methanosarcina</taxon>
    </lineage>
</organism>
<feature type="chain" id="PRO_0000361806" description="Protein pelota homolog">
    <location>
        <begin position="1"/>
        <end position="350"/>
    </location>
</feature>
<name>PELO_METBF</name>
<evidence type="ECO:0000255" key="1">
    <source>
        <dbReference type="HAMAP-Rule" id="MF_01853"/>
    </source>
</evidence>
<proteinExistence type="inferred from homology"/>
<keyword id="KW-0963">Cytoplasm</keyword>
<keyword id="KW-0255">Endonuclease</keyword>
<keyword id="KW-0378">Hydrolase</keyword>
<keyword id="KW-0479">Metal-binding</keyword>
<keyword id="KW-0540">Nuclease</keyword>